<sequence length="153" mass="17360">MNVGVAHSEVNPNTRVMSSRGIWLAYVISVAALHVILLSIPFFSIPVVWTLTNVIHNLVMYLLLHTVKGTPFETPDQGKDRLLTHWEQIDYGMQCTSSRKFLSISPVVLYLLTSFYIKYDPAHFMINTASLLSVLLPKLPQFHGVRVFGINKY</sequence>
<reference key="1">
    <citation type="journal article" date="2005" name="Genome Biol.">
        <title>Full-length cDNAs from chicken bursal lymphocytes to facilitate gene function analysis.</title>
        <authorList>
            <person name="Caldwell R.B."/>
            <person name="Kierzek A.M."/>
            <person name="Arakawa H."/>
            <person name="Bezzubov Y."/>
            <person name="Zaim J."/>
            <person name="Fiedler P."/>
            <person name="Kutter S."/>
            <person name="Blagodatski A."/>
            <person name="Kostovska D."/>
            <person name="Koter M."/>
            <person name="Plachy J."/>
            <person name="Carninci P."/>
            <person name="Hayashizaki Y."/>
            <person name="Buerstedde J.-M."/>
        </authorList>
    </citation>
    <scope>NUCLEOTIDE SEQUENCE [LARGE SCALE MRNA]</scope>
    <source>
        <strain>CB</strain>
        <tissue>Bursa of Fabricius</tissue>
    </source>
</reference>
<dbReference type="EMBL" id="AJ720694">
    <property type="protein sequence ID" value="CAG32353.1"/>
    <property type="molecule type" value="mRNA"/>
</dbReference>
<dbReference type="RefSeq" id="NP_001026496.1">
    <property type="nucleotide sequence ID" value="NM_001031325.1"/>
</dbReference>
<dbReference type="SMR" id="Q5ZIU0"/>
<dbReference type="FunCoup" id="Q5ZIU0">
    <property type="interactions" value="1652"/>
</dbReference>
<dbReference type="STRING" id="9031.ENSGALP00000064233"/>
<dbReference type="GeneID" id="425059"/>
<dbReference type="KEGG" id="gga:425059"/>
<dbReference type="CTD" id="29095"/>
<dbReference type="VEuPathDB" id="HostDB:geneid_425059"/>
<dbReference type="InParanoid" id="Q5ZIU0"/>
<dbReference type="OrthoDB" id="1932233at2759"/>
<dbReference type="PhylomeDB" id="Q5ZIU0"/>
<dbReference type="PRO" id="PR:Q5ZIU0"/>
<dbReference type="Proteomes" id="UP000000539">
    <property type="component" value="Unassembled WGS sequence"/>
</dbReference>
<dbReference type="GO" id="GO:0005783">
    <property type="term" value="C:endoplasmic reticulum"/>
    <property type="evidence" value="ECO:0000250"/>
    <property type="project" value="UniProtKB"/>
</dbReference>
<dbReference type="GO" id="GO:0005789">
    <property type="term" value="C:endoplasmic reticulum membrane"/>
    <property type="evidence" value="ECO:0007669"/>
    <property type="project" value="UniProtKB-SubCell"/>
</dbReference>
<dbReference type="GO" id="GO:0017059">
    <property type="term" value="C:serine palmitoyltransferase complex"/>
    <property type="evidence" value="ECO:0000318"/>
    <property type="project" value="GO_Central"/>
</dbReference>
<dbReference type="GO" id="GO:0006672">
    <property type="term" value="P:ceramide metabolic process"/>
    <property type="evidence" value="ECO:0000250"/>
    <property type="project" value="UniProtKB"/>
</dbReference>
<dbReference type="GO" id="GO:0090156">
    <property type="term" value="P:intracellular sphingolipid homeostasis"/>
    <property type="evidence" value="ECO:0000318"/>
    <property type="project" value="GO_Central"/>
</dbReference>
<dbReference type="GO" id="GO:2000303">
    <property type="term" value="P:regulation of ceramide biosynthetic process"/>
    <property type="evidence" value="ECO:0007669"/>
    <property type="project" value="UniProtKB-ARBA"/>
</dbReference>
<dbReference type="GO" id="GO:0030148">
    <property type="term" value="P:sphingolipid biosynthetic process"/>
    <property type="evidence" value="ECO:0000318"/>
    <property type="project" value="GO_Central"/>
</dbReference>
<dbReference type="InterPro" id="IPR007203">
    <property type="entry name" value="ORMDL"/>
</dbReference>
<dbReference type="PANTHER" id="PTHR12665">
    <property type="entry name" value="ORMDL PROTEINS"/>
    <property type="match status" value="1"/>
</dbReference>
<dbReference type="Pfam" id="PF04061">
    <property type="entry name" value="ORMDL"/>
    <property type="match status" value="1"/>
</dbReference>
<dbReference type="PIRSF" id="PIRSF018147">
    <property type="entry name" value="ORMDL"/>
    <property type="match status" value="1"/>
</dbReference>
<organism>
    <name type="scientific">Gallus gallus</name>
    <name type="common">Chicken</name>
    <dbReference type="NCBI Taxonomy" id="9031"/>
    <lineage>
        <taxon>Eukaryota</taxon>
        <taxon>Metazoa</taxon>
        <taxon>Chordata</taxon>
        <taxon>Craniata</taxon>
        <taxon>Vertebrata</taxon>
        <taxon>Euteleostomi</taxon>
        <taxon>Archelosauria</taxon>
        <taxon>Archosauria</taxon>
        <taxon>Dinosauria</taxon>
        <taxon>Saurischia</taxon>
        <taxon>Theropoda</taxon>
        <taxon>Coelurosauria</taxon>
        <taxon>Aves</taxon>
        <taxon>Neognathae</taxon>
        <taxon>Galloanserae</taxon>
        <taxon>Galliformes</taxon>
        <taxon>Phasianidae</taxon>
        <taxon>Phasianinae</taxon>
        <taxon>Gallus</taxon>
    </lineage>
</organism>
<protein>
    <recommendedName>
        <fullName>ORM1-like protein 2</fullName>
    </recommendedName>
</protein>
<proteinExistence type="evidence at transcript level"/>
<name>ORML2_CHICK</name>
<gene>
    <name type="primary">ORMDL2</name>
    <name type="ORF">RCJMB04_23j5</name>
</gene>
<evidence type="ECO:0000250" key="1">
    <source>
        <dbReference type="UniProtKB" id="Q53FV1"/>
    </source>
</evidence>
<evidence type="ECO:0000250" key="2">
    <source>
        <dbReference type="UniProtKB" id="Q8N138"/>
    </source>
</evidence>
<evidence type="ECO:0000255" key="3"/>
<evidence type="ECO:0000305" key="4"/>
<feature type="chain" id="PRO_0000215638" description="ORM1-like protein 2">
    <location>
        <begin position="1"/>
        <end position="153"/>
    </location>
</feature>
<feature type="topological domain" description="Cytoplasmic" evidence="3">
    <location>
        <begin position="1"/>
        <end position="21"/>
    </location>
</feature>
<feature type="transmembrane region" description="Helical" evidence="3">
    <location>
        <begin position="22"/>
        <end position="42"/>
    </location>
</feature>
<feature type="transmembrane region" description="Helical" evidence="3">
    <location>
        <begin position="43"/>
        <end position="63"/>
    </location>
</feature>
<feature type="topological domain" description="Cytoplasmic" evidence="3">
    <location>
        <begin position="64"/>
        <end position="105"/>
    </location>
</feature>
<feature type="transmembrane region" description="Helical" evidence="3">
    <location>
        <begin position="106"/>
        <end position="126"/>
    </location>
</feature>
<feature type="topological domain" description="Extracellular" evidence="3">
    <location>
        <begin position="127"/>
        <end position="153"/>
    </location>
</feature>
<comment type="function">
    <text evidence="1 2">Plays an essential role in the homeostatic regulation of sphingolipid de novo biosynthesis by modulating the activity of the serine palmitoyltransferase (SPT) in response to ceramide levels (By similarity). When complexed to SPT, the binding of ceramides to its N-terminus stabilizes a conformation that block SPT substrate entry, hence preventing SPT catalytic activity. Through this mechanism, maintains ceramide levels at sufficient concentrations for the production of complex sphingolipids, but which prevents the accumulation of ceramides to levels that trigger apoptosis (By similarity).</text>
</comment>
<comment type="subunit">
    <text evidence="1">Ceramide-sensitive subunit of the serine palmitoyltransferase (SPT) complex, which is also composed of SPTLC1, SPTLC2/3 and SPTSSA/B.</text>
</comment>
<comment type="subcellular location">
    <subcellularLocation>
        <location evidence="1">Endoplasmic reticulum membrane</location>
        <topology evidence="1">Multi-pass membrane protein</topology>
    </subcellularLocation>
</comment>
<comment type="domain">
    <text evidence="2">Ceramides bind to ORMDL3 N-terminus and stabilize it in a conformation that physically restricts the accessibility of the substrates to their binding sites in the serine palmitoyltransferase (SPT) complex, hence inhibiting SPT catalytic activity. In the absence of ceramides, the N-terminus is flexible and permits substrate binding, thus liberating SPT from inhibition.</text>
</comment>
<comment type="similarity">
    <text evidence="4">Belongs to the ORM family.</text>
</comment>
<keyword id="KW-0256">Endoplasmic reticulum</keyword>
<keyword id="KW-0472">Membrane</keyword>
<keyword id="KW-1185">Reference proteome</keyword>
<keyword id="KW-0812">Transmembrane</keyword>
<keyword id="KW-1133">Transmembrane helix</keyword>
<accession>Q5ZIU0</accession>